<protein>
    <recommendedName>
        <fullName>Uncharacterized protein pXO2-26/BXB0024/GBAA_pXO2_0024</fullName>
    </recommendedName>
</protein>
<feature type="chain" id="PRO_0000216842" description="Uncharacterized protein pXO2-26/BXB0024/GBAA_pXO2_0024">
    <location>
        <begin position="1"/>
        <end position="130"/>
    </location>
</feature>
<feature type="transmembrane region" description="Helical" evidence="1">
    <location>
        <begin position="8"/>
        <end position="28"/>
    </location>
</feature>
<sequence>MKELKEHPFILMIIVLGLFLVSIGGYYYRENFATDSITQGVTETVRASVISNADNSSRVQSGELFIVKSDFEKDFKKRIESNKLVKISSGATYEFKYLDNKNGSTKAIRAIIHDGDQTYQATYKVSIASS</sequence>
<proteinExistence type="predicted"/>
<name>Y6524_BACAN</name>
<keyword id="KW-0472">Membrane</keyword>
<keyword id="KW-0614">Plasmid</keyword>
<keyword id="KW-1185">Reference proteome</keyword>
<keyword id="KW-0812">Transmembrane</keyword>
<keyword id="KW-1133">Transmembrane helix</keyword>
<accession>Q9RN06</accession>
<geneLocation type="plasmid">
    <name>pXO2</name>
</geneLocation>
<reference key="1">
    <citation type="journal article" date="1999" name="J. Appl. Microbiol.">
        <title>Sequence, assembly and analysis of pXO1 and pXO2.</title>
        <authorList>
            <person name="Okinaka R.T."/>
            <person name="Cloud K."/>
            <person name="Hampton O."/>
            <person name="Hoffmaster A."/>
            <person name="Hill K.K."/>
            <person name="Keim P."/>
            <person name="Koehler T."/>
            <person name="Lamke G."/>
            <person name="Kumano S."/>
            <person name="Manter D."/>
            <person name="Martinez Y."/>
            <person name="Ricke D."/>
            <person name="Svensson R."/>
            <person name="Jackson P.J."/>
        </authorList>
    </citation>
    <scope>NUCLEOTIDE SEQUENCE [GENOMIC DNA]</scope>
    <source>
        <strain>Pasteur</strain>
    </source>
</reference>
<reference key="2">
    <citation type="journal article" date="2002" name="Science">
        <title>Comparative genome sequencing for discovery of novel polymorphisms in Bacillus anthracis.</title>
        <authorList>
            <person name="Read T.D."/>
            <person name="Salzberg S.L."/>
            <person name="Pop M."/>
            <person name="Shumway M.F."/>
            <person name="Umayam L."/>
            <person name="Jiang L."/>
            <person name="Holtzapple E."/>
            <person name="Busch J.D."/>
            <person name="Smith K.L."/>
            <person name="Schupp J.M."/>
            <person name="Solomon D."/>
            <person name="Keim P."/>
            <person name="Fraser C.M."/>
        </authorList>
    </citation>
    <scope>NUCLEOTIDE SEQUENCE [GENOMIC DNA]</scope>
    <source>
        <strain>Ames / isolate Florida / A2012</strain>
    </source>
</reference>
<reference key="3">
    <citation type="journal article" date="2009" name="J. Bacteriol.">
        <title>The complete genome sequence of Bacillus anthracis Ames 'Ancestor'.</title>
        <authorList>
            <person name="Ravel J."/>
            <person name="Jiang L."/>
            <person name="Stanley S.T."/>
            <person name="Wilson M.R."/>
            <person name="Decker R.S."/>
            <person name="Read T.D."/>
            <person name="Worsham P."/>
            <person name="Keim P.S."/>
            <person name="Salzberg S.L."/>
            <person name="Fraser-Liggett C.M."/>
            <person name="Rasko D.A."/>
        </authorList>
    </citation>
    <scope>NUCLEOTIDE SEQUENCE [LARGE SCALE GENOMIC DNA]</scope>
    <source>
        <strain>Ames ancestor</strain>
    </source>
</reference>
<dbReference type="EMBL" id="AF188935">
    <property type="protein sequence ID" value="AAF13631.1"/>
    <property type="molecule type" value="Genomic_DNA"/>
</dbReference>
<dbReference type="EMBL" id="AE011191">
    <property type="protein sequence ID" value="AAM26184.1"/>
    <property type="molecule type" value="Genomic_DNA"/>
</dbReference>
<dbReference type="EMBL" id="AE017335">
    <property type="protein sequence ID" value="AAT28954.2"/>
    <property type="molecule type" value="Genomic_DNA"/>
</dbReference>
<dbReference type="RefSeq" id="NP_053181.1">
    <property type="nucleotide sequence ID" value="NC_002146.1"/>
</dbReference>
<dbReference type="KEGG" id="bar:GBAA_pXO2_0024"/>
<dbReference type="PATRIC" id="fig|1392.230.peg.5869"/>
<dbReference type="HOGENOM" id="CLU_152454_1_0_9"/>
<dbReference type="OMA" id="MQGITET"/>
<dbReference type="Proteomes" id="UP000000594">
    <property type="component" value="Plasmid pXO2"/>
</dbReference>
<dbReference type="GO" id="GO:0016020">
    <property type="term" value="C:membrane"/>
    <property type="evidence" value="ECO:0007669"/>
    <property type="project" value="UniProtKB-SubCell"/>
</dbReference>
<organism>
    <name type="scientific">Bacillus anthracis</name>
    <dbReference type="NCBI Taxonomy" id="1392"/>
    <lineage>
        <taxon>Bacteria</taxon>
        <taxon>Bacillati</taxon>
        <taxon>Bacillota</taxon>
        <taxon>Bacilli</taxon>
        <taxon>Bacillales</taxon>
        <taxon>Bacillaceae</taxon>
        <taxon>Bacillus</taxon>
        <taxon>Bacillus cereus group</taxon>
    </lineage>
</organism>
<gene>
    <name type="ordered locus">pXO2-26</name>
    <name type="ordered locus">BXB0024</name>
    <name type="ordered locus">GBAA_pXO2_0024</name>
</gene>
<evidence type="ECO:0000255" key="1"/>
<evidence type="ECO:0000305" key="2"/>
<comment type="subcellular location">
    <subcellularLocation>
        <location evidence="2">Membrane</location>
        <topology evidence="2">Single-pass membrane protein</topology>
    </subcellularLocation>
</comment>